<dbReference type="EC" id="7.5.2.6" evidence="1"/>
<dbReference type="EMBL" id="CP000447">
    <property type="protein sequence ID" value="ABI72233.1"/>
    <property type="molecule type" value="Genomic_DNA"/>
</dbReference>
<dbReference type="RefSeq" id="WP_011637842.1">
    <property type="nucleotide sequence ID" value="NC_008345.1"/>
</dbReference>
<dbReference type="SMR" id="Q080T2"/>
<dbReference type="STRING" id="318167.Sfri_2388"/>
<dbReference type="KEGG" id="sfr:Sfri_2388"/>
<dbReference type="eggNOG" id="COG1132">
    <property type="taxonomic scope" value="Bacteria"/>
</dbReference>
<dbReference type="HOGENOM" id="CLU_000604_84_3_6"/>
<dbReference type="OrthoDB" id="9782586at2"/>
<dbReference type="Proteomes" id="UP000000684">
    <property type="component" value="Chromosome"/>
</dbReference>
<dbReference type="GO" id="GO:0005886">
    <property type="term" value="C:plasma membrane"/>
    <property type="evidence" value="ECO:0007669"/>
    <property type="project" value="UniProtKB-SubCell"/>
</dbReference>
<dbReference type="GO" id="GO:0015421">
    <property type="term" value="F:ABC-type oligopeptide transporter activity"/>
    <property type="evidence" value="ECO:0007669"/>
    <property type="project" value="TreeGrafter"/>
</dbReference>
<dbReference type="GO" id="GO:0005524">
    <property type="term" value="F:ATP binding"/>
    <property type="evidence" value="ECO:0007669"/>
    <property type="project" value="UniProtKB-KW"/>
</dbReference>
<dbReference type="GO" id="GO:0016887">
    <property type="term" value="F:ATP hydrolysis activity"/>
    <property type="evidence" value="ECO:0007669"/>
    <property type="project" value="InterPro"/>
</dbReference>
<dbReference type="GO" id="GO:0034040">
    <property type="term" value="F:ATPase-coupled lipid transmembrane transporter activity"/>
    <property type="evidence" value="ECO:0007669"/>
    <property type="project" value="InterPro"/>
</dbReference>
<dbReference type="CDD" id="cd18552">
    <property type="entry name" value="ABC_6TM_MsbA_like"/>
    <property type="match status" value="1"/>
</dbReference>
<dbReference type="FunFam" id="3.40.50.300:FF:000140">
    <property type="entry name" value="Lipid A export ATP-binding/permease protein MsbA"/>
    <property type="match status" value="1"/>
</dbReference>
<dbReference type="Gene3D" id="1.20.1560.10">
    <property type="entry name" value="ABC transporter type 1, transmembrane domain"/>
    <property type="match status" value="1"/>
</dbReference>
<dbReference type="Gene3D" id="3.40.50.300">
    <property type="entry name" value="P-loop containing nucleotide triphosphate hydrolases"/>
    <property type="match status" value="1"/>
</dbReference>
<dbReference type="InterPro" id="IPR003593">
    <property type="entry name" value="AAA+_ATPase"/>
</dbReference>
<dbReference type="InterPro" id="IPR011527">
    <property type="entry name" value="ABC1_TM_dom"/>
</dbReference>
<dbReference type="InterPro" id="IPR036640">
    <property type="entry name" value="ABC1_TM_sf"/>
</dbReference>
<dbReference type="InterPro" id="IPR003439">
    <property type="entry name" value="ABC_transporter-like_ATP-bd"/>
</dbReference>
<dbReference type="InterPro" id="IPR017871">
    <property type="entry name" value="ABC_transporter-like_CS"/>
</dbReference>
<dbReference type="InterPro" id="IPR011917">
    <property type="entry name" value="ABC_transpr_lipidA"/>
</dbReference>
<dbReference type="InterPro" id="IPR027417">
    <property type="entry name" value="P-loop_NTPase"/>
</dbReference>
<dbReference type="InterPro" id="IPR039421">
    <property type="entry name" value="Type_1_exporter"/>
</dbReference>
<dbReference type="NCBIfam" id="TIGR02203">
    <property type="entry name" value="MsbA_lipidA"/>
    <property type="match status" value="1"/>
</dbReference>
<dbReference type="PANTHER" id="PTHR43394:SF1">
    <property type="entry name" value="ATP-BINDING CASSETTE SUB-FAMILY B MEMBER 10, MITOCHONDRIAL"/>
    <property type="match status" value="1"/>
</dbReference>
<dbReference type="PANTHER" id="PTHR43394">
    <property type="entry name" value="ATP-DEPENDENT PERMEASE MDL1, MITOCHONDRIAL"/>
    <property type="match status" value="1"/>
</dbReference>
<dbReference type="Pfam" id="PF00664">
    <property type="entry name" value="ABC_membrane"/>
    <property type="match status" value="1"/>
</dbReference>
<dbReference type="Pfam" id="PF00005">
    <property type="entry name" value="ABC_tran"/>
    <property type="match status" value="1"/>
</dbReference>
<dbReference type="SMART" id="SM00382">
    <property type="entry name" value="AAA"/>
    <property type="match status" value="1"/>
</dbReference>
<dbReference type="SUPFAM" id="SSF90123">
    <property type="entry name" value="ABC transporter transmembrane region"/>
    <property type="match status" value="1"/>
</dbReference>
<dbReference type="SUPFAM" id="SSF52540">
    <property type="entry name" value="P-loop containing nucleoside triphosphate hydrolases"/>
    <property type="match status" value="1"/>
</dbReference>
<dbReference type="PROSITE" id="PS50929">
    <property type="entry name" value="ABC_TM1F"/>
    <property type="match status" value="1"/>
</dbReference>
<dbReference type="PROSITE" id="PS00211">
    <property type="entry name" value="ABC_TRANSPORTER_1"/>
    <property type="match status" value="1"/>
</dbReference>
<dbReference type="PROSITE" id="PS50893">
    <property type="entry name" value="ABC_TRANSPORTER_2"/>
    <property type="match status" value="1"/>
</dbReference>
<dbReference type="PROSITE" id="PS51239">
    <property type="entry name" value="MSBA"/>
    <property type="match status" value="1"/>
</dbReference>
<comment type="function">
    <text evidence="1">Involved in lipopolysaccharide (LPS) biosynthesis. Translocates lipid A-core from the inner to the outer leaflet of the inner membrane. Transmembrane domains (TMD) form a pore in the inner membrane and the ATP-binding domain (NBD) is responsible for energy generation.</text>
</comment>
<comment type="catalytic activity">
    <reaction evidence="1">
        <text>ATP + H2O + lipid A-core oligosaccharideSide 1 = ADP + phosphate + lipid A-core oligosaccharideSide 2.</text>
        <dbReference type="EC" id="7.5.2.6"/>
    </reaction>
</comment>
<comment type="subunit">
    <text evidence="1">Homodimer.</text>
</comment>
<comment type="subcellular location">
    <subcellularLocation>
        <location evidence="1">Cell inner membrane</location>
        <topology evidence="1">Multi-pass membrane protein</topology>
    </subcellularLocation>
</comment>
<comment type="domain">
    <text evidence="1">In MsbA the ATP-binding domain (NBD) and the transmembrane domain (TMD) are fused.</text>
</comment>
<comment type="similarity">
    <text evidence="1">Belongs to the ABC transporter superfamily. Lipid exporter (TC 3.A.1.106) family.</text>
</comment>
<proteinExistence type="inferred from homology"/>
<evidence type="ECO:0000255" key="1">
    <source>
        <dbReference type="HAMAP-Rule" id="MF_01703"/>
    </source>
</evidence>
<keyword id="KW-0067">ATP-binding</keyword>
<keyword id="KW-0997">Cell inner membrane</keyword>
<keyword id="KW-1003">Cell membrane</keyword>
<keyword id="KW-0445">Lipid transport</keyword>
<keyword id="KW-0472">Membrane</keyword>
<keyword id="KW-0547">Nucleotide-binding</keyword>
<keyword id="KW-1185">Reference proteome</keyword>
<keyword id="KW-1278">Translocase</keyword>
<keyword id="KW-0812">Transmembrane</keyword>
<keyword id="KW-1133">Transmembrane helix</keyword>
<keyword id="KW-0813">Transport</keyword>
<feature type="chain" id="PRO_0000271653" description="ATP-dependent lipid A-core flippase">
    <location>
        <begin position="1"/>
        <end position="600"/>
    </location>
</feature>
<feature type="transmembrane region" description="Helical" evidence="1">
    <location>
        <begin position="28"/>
        <end position="48"/>
    </location>
</feature>
<feature type="transmembrane region" description="Helical" evidence="1">
    <location>
        <begin position="80"/>
        <end position="100"/>
    </location>
</feature>
<feature type="transmembrane region" description="Helical" evidence="1">
    <location>
        <begin position="182"/>
        <end position="202"/>
    </location>
</feature>
<feature type="transmembrane region" description="Helical" evidence="1">
    <location>
        <begin position="267"/>
        <end position="287"/>
    </location>
</feature>
<feature type="transmembrane region" description="Helical" evidence="1">
    <location>
        <begin position="295"/>
        <end position="315"/>
    </location>
</feature>
<feature type="domain" description="ABC transmembrane type-1" evidence="1">
    <location>
        <begin position="28"/>
        <end position="327"/>
    </location>
</feature>
<feature type="domain" description="ABC transporter" evidence="1">
    <location>
        <begin position="359"/>
        <end position="596"/>
    </location>
</feature>
<feature type="binding site" evidence="1">
    <location>
        <begin position="393"/>
        <end position="400"/>
    </location>
    <ligand>
        <name>ATP</name>
        <dbReference type="ChEBI" id="CHEBI:30616"/>
    </ligand>
</feature>
<organism>
    <name type="scientific">Shewanella frigidimarina (strain NCIMB 400)</name>
    <dbReference type="NCBI Taxonomy" id="318167"/>
    <lineage>
        <taxon>Bacteria</taxon>
        <taxon>Pseudomonadati</taxon>
        <taxon>Pseudomonadota</taxon>
        <taxon>Gammaproteobacteria</taxon>
        <taxon>Alteromonadales</taxon>
        <taxon>Shewanellaceae</taxon>
        <taxon>Shewanella</taxon>
    </lineage>
</organism>
<reference key="1">
    <citation type="submission" date="2006-08" db="EMBL/GenBank/DDBJ databases">
        <title>Complete sequence of Shewanella frigidimarina NCIMB 400.</title>
        <authorList>
            <consortium name="US DOE Joint Genome Institute"/>
            <person name="Copeland A."/>
            <person name="Lucas S."/>
            <person name="Lapidus A."/>
            <person name="Barry K."/>
            <person name="Detter J.C."/>
            <person name="Glavina del Rio T."/>
            <person name="Hammon N."/>
            <person name="Israni S."/>
            <person name="Dalin E."/>
            <person name="Tice H."/>
            <person name="Pitluck S."/>
            <person name="Fredrickson J.K."/>
            <person name="Kolker E."/>
            <person name="McCuel L.A."/>
            <person name="DiChristina T."/>
            <person name="Nealson K.H."/>
            <person name="Newman D."/>
            <person name="Tiedje J.M."/>
            <person name="Zhou J."/>
            <person name="Romine M.F."/>
            <person name="Culley D.E."/>
            <person name="Serres M."/>
            <person name="Chertkov O."/>
            <person name="Brettin T."/>
            <person name="Bruce D."/>
            <person name="Han C."/>
            <person name="Tapia R."/>
            <person name="Gilna P."/>
            <person name="Schmutz J."/>
            <person name="Larimer F."/>
            <person name="Land M."/>
            <person name="Hauser L."/>
            <person name="Kyrpides N."/>
            <person name="Mikhailova N."/>
            <person name="Richardson P."/>
        </authorList>
    </citation>
    <scope>NUCLEOTIDE SEQUENCE [LARGE SCALE GENOMIC DNA]</scope>
    <source>
        <strain>NCIMB 400</strain>
    </source>
</reference>
<sequence>MSASPKNEMWVVFKRLMAYVVPMKAMFIMAVLGLITYGAVDAAFIAFIKPFIDEGFSQTPAIVAGVDLPTHGGFNANKDIMLMAPIAVILMFSLRGVANFVSTYCVSYMSAQLIMDMRQQVFEHYLRLPVSYIDRENSGNLISRVTFDTEQIARASGSALISIVRDSMTAIGMLGIMFYYSWKLSLCILVIGPIMGVVISVVSKRFRKVSKQIQSAMGGVTATTEQMIKGHKNVLVFGGQKTEVERFFQVNDRNRYQNMKLAVAQSISQPLIMVIGSFALAFVLYAATWDSMKTDLTAGTFAAILGAMLAMLQPIKNLTRVNAEFQRGIAACTTVFELLDTAPEPDNGVFSIDRVEGKLAFDNVTFAYPGQEKSALNGINFEVKPGKTVALVGRSGSGKSTIASLITRFYGDLSTGDIRLDDTSIYDYQLKSLRNQVALVSQQVTLFNDTIANNIAYAYPGEVTREQIVHAAELAYAMEFIDTLPEGLDTQVGENGVLLSGGQRQRIAIARAMLRDAPVLILDEATSALDTESEKAIQKGLDNLRHNRTSIVIAHRLSTIESADEILVIDQGKIVERGNHSELIAQAGIYANLYQMQFSQ</sequence>
<name>MSBA_SHEFN</name>
<accession>Q080T2</accession>
<gene>
    <name evidence="1" type="primary">msbA</name>
    <name type="ordered locus">Sfri_2388</name>
</gene>
<protein>
    <recommendedName>
        <fullName evidence="1">ATP-dependent lipid A-core flippase</fullName>
        <ecNumber evidence="1">7.5.2.6</ecNumber>
    </recommendedName>
    <alternativeName>
        <fullName evidence="1">Lipid A export ATP-binding/permease protein MsbA</fullName>
    </alternativeName>
</protein>